<keyword id="KW-0560">Oxidoreductase</keyword>
<keyword id="KW-1185">Reference proteome</keyword>
<keyword id="KW-0819">tRNA processing</keyword>
<comment type="function">
    <text evidence="1">Catalyzes oxygen-dependent 5-hydroxyuridine (ho5U) modification at position 34 in tRNAs.</text>
</comment>
<comment type="catalytic activity">
    <reaction evidence="1">
        <text>uridine(34) in tRNA + AH2 + O2 = 5-hydroxyuridine(34) in tRNA + A + H2O</text>
        <dbReference type="Rhea" id="RHEA:64224"/>
        <dbReference type="Rhea" id="RHEA-COMP:11727"/>
        <dbReference type="Rhea" id="RHEA-COMP:13381"/>
        <dbReference type="ChEBI" id="CHEBI:13193"/>
        <dbReference type="ChEBI" id="CHEBI:15377"/>
        <dbReference type="ChEBI" id="CHEBI:15379"/>
        <dbReference type="ChEBI" id="CHEBI:17499"/>
        <dbReference type="ChEBI" id="CHEBI:65315"/>
        <dbReference type="ChEBI" id="CHEBI:136877"/>
    </reaction>
</comment>
<comment type="similarity">
    <text evidence="1">Belongs to the TrhO family.</text>
</comment>
<feature type="chain" id="PRO_1000135466" description="tRNA uridine(34) hydroxylase">
    <location>
        <begin position="1"/>
        <end position="315"/>
    </location>
</feature>
<feature type="domain" description="Rhodanese" evidence="1">
    <location>
        <begin position="122"/>
        <end position="223"/>
    </location>
</feature>
<feature type="active site" description="Cysteine persulfide intermediate" evidence="1">
    <location>
        <position position="183"/>
    </location>
</feature>
<proteinExistence type="inferred from homology"/>
<evidence type="ECO:0000255" key="1">
    <source>
        <dbReference type="HAMAP-Rule" id="MF_00469"/>
    </source>
</evidence>
<reference key="1">
    <citation type="journal article" date="2010" name="J. Bacteriol.">
        <title>The genetic basis of laboratory adaptation in Caulobacter crescentus.</title>
        <authorList>
            <person name="Marks M.E."/>
            <person name="Castro-Rojas C.M."/>
            <person name="Teiling C."/>
            <person name="Du L."/>
            <person name="Kapatral V."/>
            <person name="Walunas T.L."/>
            <person name="Crosson S."/>
        </authorList>
    </citation>
    <scope>NUCLEOTIDE SEQUENCE [LARGE SCALE GENOMIC DNA]</scope>
    <source>
        <strain>NA1000 / CB15N</strain>
    </source>
</reference>
<accession>B8H3F9</accession>
<organism>
    <name type="scientific">Caulobacter vibrioides (strain NA1000 / CB15N)</name>
    <name type="common">Caulobacter crescentus</name>
    <dbReference type="NCBI Taxonomy" id="565050"/>
    <lineage>
        <taxon>Bacteria</taxon>
        <taxon>Pseudomonadati</taxon>
        <taxon>Pseudomonadota</taxon>
        <taxon>Alphaproteobacteria</taxon>
        <taxon>Caulobacterales</taxon>
        <taxon>Caulobacteraceae</taxon>
        <taxon>Caulobacter</taxon>
    </lineage>
</organism>
<sequence length="315" mass="34547">MASYRVAALYRFTRFEDPAAIQGPLAALCCSLGVKGTLLLAREGINGTIAGEDAAIEAVLAHIRALPGCADLTPKTAWAERMPFYRMKVRLKKEIVTLGEPDLDPTDAGTYVEPADWNALISDPDVLVIDTRNAYEVAVGRFEGAIDPQTASFADFPAWFRDWRKSVEAQRGPEAPLKVAMYCTGGIRCEKSTAFLKAEGVEQVFHLKGGVLDYLEQIPQPESLWRGECFVFDERVSVGHGLVKGDHVLCRGCRMPVSPQDQASPLYVEGVACPACHDQRNEEQKARAAERHRQVLHCEALGVDHVGATLPTKID</sequence>
<protein>
    <recommendedName>
        <fullName evidence="1">tRNA uridine(34) hydroxylase</fullName>
        <ecNumber evidence="1">1.14.-.-</ecNumber>
    </recommendedName>
    <alternativeName>
        <fullName evidence="1">tRNA hydroxylation protein O</fullName>
    </alternativeName>
</protein>
<gene>
    <name evidence="1" type="primary">trhO</name>
    <name type="ordered locus">CCNA_01113</name>
</gene>
<dbReference type="EC" id="1.14.-.-" evidence="1"/>
<dbReference type="EMBL" id="CP001340">
    <property type="protein sequence ID" value="ACL94578.1"/>
    <property type="molecule type" value="Genomic_DNA"/>
</dbReference>
<dbReference type="RefSeq" id="WP_010918944.1">
    <property type="nucleotide sequence ID" value="NC_011916.1"/>
</dbReference>
<dbReference type="RefSeq" id="YP_002516486.1">
    <property type="nucleotide sequence ID" value="NC_011916.1"/>
</dbReference>
<dbReference type="SMR" id="B8H3F9"/>
<dbReference type="GeneID" id="7331484"/>
<dbReference type="KEGG" id="ccs:CCNA_01113"/>
<dbReference type="PATRIC" id="fig|565050.3.peg.1094"/>
<dbReference type="HOGENOM" id="CLU_038878_0_0_5"/>
<dbReference type="OrthoDB" id="9778326at2"/>
<dbReference type="PhylomeDB" id="B8H3F9"/>
<dbReference type="Proteomes" id="UP000001364">
    <property type="component" value="Chromosome"/>
</dbReference>
<dbReference type="GO" id="GO:0016705">
    <property type="term" value="F:oxidoreductase activity, acting on paired donors, with incorporation or reduction of molecular oxygen"/>
    <property type="evidence" value="ECO:0007669"/>
    <property type="project" value="UniProtKB-UniRule"/>
</dbReference>
<dbReference type="GO" id="GO:0006400">
    <property type="term" value="P:tRNA modification"/>
    <property type="evidence" value="ECO:0007669"/>
    <property type="project" value="UniProtKB-UniRule"/>
</dbReference>
<dbReference type="CDD" id="cd01518">
    <property type="entry name" value="RHOD_YceA"/>
    <property type="match status" value="1"/>
</dbReference>
<dbReference type="Gene3D" id="3.30.70.100">
    <property type="match status" value="1"/>
</dbReference>
<dbReference type="Gene3D" id="3.40.250.10">
    <property type="entry name" value="Rhodanese-like domain"/>
    <property type="match status" value="1"/>
</dbReference>
<dbReference type="HAMAP" id="MF_00469">
    <property type="entry name" value="TrhO"/>
    <property type="match status" value="1"/>
</dbReference>
<dbReference type="InterPro" id="IPR001763">
    <property type="entry name" value="Rhodanese-like_dom"/>
</dbReference>
<dbReference type="InterPro" id="IPR036873">
    <property type="entry name" value="Rhodanese-like_dom_sf"/>
</dbReference>
<dbReference type="InterPro" id="IPR020936">
    <property type="entry name" value="TrhO"/>
</dbReference>
<dbReference type="InterPro" id="IPR040503">
    <property type="entry name" value="TRHO_N"/>
</dbReference>
<dbReference type="NCBIfam" id="NF001136">
    <property type="entry name" value="PRK00142.1-4"/>
    <property type="match status" value="1"/>
</dbReference>
<dbReference type="PANTHER" id="PTHR43268:SF3">
    <property type="entry name" value="RHODANESE-LIKE DOMAIN-CONTAINING PROTEIN 7-RELATED"/>
    <property type="match status" value="1"/>
</dbReference>
<dbReference type="PANTHER" id="PTHR43268">
    <property type="entry name" value="THIOSULFATE SULFURTRANSFERASE/RHODANESE-LIKE DOMAIN-CONTAINING PROTEIN 2"/>
    <property type="match status" value="1"/>
</dbReference>
<dbReference type="Pfam" id="PF00581">
    <property type="entry name" value="Rhodanese"/>
    <property type="match status" value="1"/>
</dbReference>
<dbReference type="Pfam" id="PF17773">
    <property type="entry name" value="UPF0176_N"/>
    <property type="match status" value="1"/>
</dbReference>
<dbReference type="SMART" id="SM00450">
    <property type="entry name" value="RHOD"/>
    <property type="match status" value="1"/>
</dbReference>
<dbReference type="SUPFAM" id="SSF52821">
    <property type="entry name" value="Rhodanese/Cell cycle control phosphatase"/>
    <property type="match status" value="1"/>
</dbReference>
<dbReference type="PROSITE" id="PS50206">
    <property type="entry name" value="RHODANESE_3"/>
    <property type="match status" value="1"/>
</dbReference>
<name>TRHO_CAUVN</name>